<name>SYDND_PSEPF</name>
<dbReference type="EC" id="6.1.1.23" evidence="1"/>
<dbReference type="EMBL" id="CP000094">
    <property type="protein sequence ID" value="ABA76148.1"/>
    <property type="molecule type" value="Genomic_DNA"/>
</dbReference>
<dbReference type="RefSeq" id="WP_011335645.1">
    <property type="nucleotide sequence ID" value="NC_007492.2"/>
</dbReference>
<dbReference type="SMR" id="Q3K7V6"/>
<dbReference type="KEGG" id="pfo:Pfl01_4411"/>
<dbReference type="eggNOG" id="COG0173">
    <property type="taxonomic scope" value="Bacteria"/>
</dbReference>
<dbReference type="HOGENOM" id="CLU_014330_3_2_6"/>
<dbReference type="Proteomes" id="UP000002704">
    <property type="component" value="Chromosome"/>
</dbReference>
<dbReference type="GO" id="GO:0005737">
    <property type="term" value="C:cytoplasm"/>
    <property type="evidence" value="ECO:0007669"/>
    <property type="project" value="UniProtKB-SubCell"/>
</dbReference>
<dbReference type="GO" id="GO:0004815">
    <property type="term" value="F:aspartate-tRNA ligase activity"/>
    <property type="evidence" value="ECO:0007669"/>
    <property type="project" value="UniProtKB-UniRule"/>
</dbReference>
<dbReference type="GO" id="GO:0050560">
    <property type="term" value="F:aspartate-tRNA(Asn) ligase activity"/>
    <property type="evidence" value="ECO:0007669"/>
    <property type="project" value="UniProtKB-EC"/>
</dbReference>
<dbReference type="GO" id="GO:0005524">
    <property type="term" value="F:ATP binding"/>
    <property type="evidence" value="ECO:0007669"/>
    <property type="project" value="UniProtKB-UniRule"/>
</dbReference>
<dbReference type="GO" id="GO:0003676">
    <property type="term" value="F:nucleic acid binding"/>
    <property type="evidence" value="ECO:0007669"/>
    <property type="project" value="InterPro"/>
</dbReference>
<dbReference type="GO" id="GO:0006422">
    <property type="term" value="P:aspartyl-tRNA aminoacylation"/>
    <property type="evidence" value="ECO:0007669"/>
    <property type="project" value="UniProtKB-UniRule"/>
</dbReference>
<dbReference type="CDD" id="cd00777">
    <property type="entry name" value="AspRS_core"/>
    <property type="match status" value="1"/>
</dbReference>
<dbReference type="CDD" id="cd04317">
    <property type="entry name" value="EcAspRS_like_N"/>
    <property type="match status" value="1"/>
</dbReference>
<dbReference type="Gene3D" id="3.30.930.10">
    <property type="entry name" value="Bira Bifunctional Protein, Domain 2"/>
    <property type="match status" value="1"/>
</dbReference>
<dbReference type="Gene3D" id="3.30.1360.30">
    <property type="entry name" value="GAD-like domain"/>
    <property type="match status" value="1"/>
</dbReference>
<dbReference type="Gene3D" id="2.40.50.140">
    <property type="entry name" value="Nucleic acid-binding proteins"/>
    <property type="match status" value="1"/>
</dbReference>
<dbReference type="HAMAP" id="MF_00044">
    <property type="entry name" value="Asp_tRNA_synth_type1"/>
    <property type="match status" value="1"/>
</dbReference>
<dbReference type="InterPro" id="IPR004364">
    <property type="entry name" value="Aa-tRNA-synt_II"/>
</dbReference>
<dbReference type="InterPro" id="IPR006195">
    <property type="entry name" value="aa-tRNA-synth_II"/>
</dbReference>
<dbReference type="InterPro" id="IPR045864">
    <property type="entry name" value="aa-tRNA-synth_II/BPL/LPL"/>
</dbReference>
<dbReference type="InterPro" id="IPR004524">
    <property type="entry name" value="Asp-tRNA-ligase_1"/>
</dbReference>
<dbReference type="InterPro" id="IPR047089">
    <property type="entry name" value="Asp-tRNA-ligase_1_N"/>
</dbReference>
<dbReference type="InterPro" id="IPR002312">
    <property type="entry name" value="Asp/Asn-tRNA-synth_IIb"/>
</dbReference>
<dbReference type="InterPro" id="IPR047090">
    <property type="entry name" value="AspRS_core"/>
</dbReference>
<dbReference type="InterPro" id="IPR004115">
    <property type="entry name" value="GAD-like_sf"/>
</dbReference>
<dbReference type="InterPro" id="IPR029351">
    <property type="entry name" value="GAD_dom"/>
</dbReference>
<dbReference type="InterPro" id="IPR012340">
    <property type="entry name" value="NA-bd_OB-fold"/>
</dbReference>
<dbReference type="InterPro" id="IPR004365">
    <property type="entry name" value="NA-bd_OB_tRNA"/>
</dbReference>
<dbReference type="NCBIfam" id="TIGR00459">
    <property type="entry name" value="aspS_bact"/>
    <property type="match status" value="1"/>
</dbReference>
<dbReference type="NCBIfam" id="NF001750">
    <property type="entry name" value="PRK00476.1"/>
    <property type="match status" value="1"/>
</dbReference>
<dbReference type="PANTHER" id="PTHR22594:SF5">
    <property type="entry name" value="ASPARTATE--TRNA LIGASE, MITOCHONDRIAL"/>
    <property type="match status" value="1"/>
</dbReference>
<dbReference type="PANTHER" id="PTHR22594">
    <property type="entry name" value="ASPARTYL/LYSYL-TRNA SYNTHETASE"/>
    <property type="match status" value="1"/>
</dbReference>
<dbReference type="Pfam" id="PF02938">
    <property type="entry name" value="GAD"/>
    <property type="match status" value="1"/>
</dbReference>
<dbReference type="Pfam" id="PF00152">
    <property type="entry name" value="tRNA-synt_2"/>
    <property type="match status" value="1"/>
</dbReference>
<dbReference type="Pfam" id="PF01336">
    <property type="entry name" value="tRNA_anti-codon"/>
    <property type="match status" value="1"/>
</dbReference>
<dbReference type="PRINTS" id="PR01042">
    <property type="entry name" value="TRNASYNTHASP"/>
</dbReference>
<dbReference type="SUPFAM" id="SSF55681">
    <property type="entry name" value="Class II aaRS and biotin synthetases"/>
    <property type="match status" value="1"/>
</dbReference>
<dbReference type="SUPFAM" id="SSF55261">
    <property type="entry name" value="GAD domain-like"/>
    <property type="match status" value="1"/>
</dbReference>
<dbReference type="SUPFAM" id="SSF50249">
    <property type="entry name" value="Nucleic acid-binding proteins"/>
    <property type="match status" value="1"/>
</dbReference>
<dbReference type="PROSITE" id="PS50862">
    <property type="entry name" value="AA_TRNA_LIGASE_II"/>
    <property type="match status" value="1"/>
</dbReference>
<gene>
    <name evidence="1" type="primary">aspS</name>
    <name type="ordered locus">Pfl01_4411</name>
</gene>
<organism>
    <name type="scientific">Pseudomonas fluorescens (strain Pf0-1)</name>
    <dbReference type="NCBI Taxonomy" id="205922"/>
    <lineage>
        <taxon>Bacteria</taxon>
        <taxon>Pseudomonadati</taxon>
        <taxon>Pseudomonadota</taxon>
        <taxon>Gammaproteobacteria</taxon>
        <taxon>Pseudomonadales</taxon>
        <taxon>Pseudomonadaceae</taxon>
        <taxon>Pseudomonas</taxon>
    </lineage>
</organism>
<keyword id="KW-0030">Aminoacyl-tRNA synthetase</keyword>
<keyword id="KW-0067">ATP-binding</keyword>
<keyword id="KW-0963">Cytoplasm</keyword>
<keyword id="KW-0436">Ligase</keyword>
<keyword id="KW-0547">Nucleotide-binding</keyword>
<keyword id="KW-0648">Protein biosynthesis</keyword>
<accession>Q3K7V6</accession>
<feature type="chain" id="PRO_0000235546" description="Aspartate--tRNA(Asp/Asn) ligase">
    <location>
        <begin position="1"/>
        <end position="591"/>
    </location>
</feature>
<feature type="region of interest" description="Aspartate" evidence="1">
    <location>
        <begin position="198"/>
        <end position="201"/>
    </location>
</feature>
<feature type="binding site" evidence="1">
    <location>
        <position position="174"/>
    </location>
    <ligand>
        <name>L-aspartate</name>
        <dbReference type="ChEBI" id="CHEBI:29991"/>
    </ligand>
</feature>
<feature type="binding site" evidence="1">
    <location>
        <begin position="220"/>
        <end position="222"/>
    </location>
    <ligand>
        <name>ATP</name>
        <dbReference type="ChEBI" id="CHEBI:30616"/>
    </ligand>
</feature>
<feature type="binding site" evidence="1">
    <location>
        <position position="220"/>
    </location>
    <ligand>
        <name>L-aspartate</name>
        <dbReference type="ChEBI" id="CHEBI:29991"/>
    </ligand>
</feature>
<feature type="binding site" evidence="1">
    <location>
        <position position="229"/>
    </location>
    <ligand>
        <name>ATP</name>
        <dbReference type="ChEBI" id="CHEBI:30616"/>
    </ligand>
</feature>
<feature type="binding site" evidence="1">
    <location>
        <position position="450"/>
    </location>
    <ligand>
        <name>L-aspartate</name>
        <dbReference type="ChEBI" id="CHEBI:29991"/>
    </ligand>
</feature>
<feature type="binding site" evidence="1">
    <location>
        <position position="483"/>
    </location>
    <ligand>
        <name>ATP</name>
        <dbReference type="ChEBI" id="CHEBI:30616"/>
    </ligand>
</feature>
<feature type="binding site" evidence="1">
    <location>
        <position position="490"/>
    </location>
    <ligand>
        <name>L-aspartate</name>
        <dbReference type="ChEBI" id="CHEBI:29991"/>
    </ligand>
</feature>
<feature type="binding site" evidence="1">
    <location>
        <begin position="535"/>
        <end position="538"/>
    </location>
    <ligand>
        <name>ATP</name>
        <dbReference type="ChEBI" id="CHEBI:30616"/>
    </ligand>
</feature>
<feature type="site" description="Important for tRNA non-discrimination" evidence="1">
    <location>
        <position position="31"/>
    </location>
</feature>
<feature type="site" description="Important for tRNA non-discrimination" evidence="1">
    <location>
        <position position="82"/>
    </location>
</feature>
<comment type="function">
    <text evidence="1">Aspartyl-tRNA synthetase with relaxed tRNA specificity since it is able to aspartylate not only its cognate tRNA(Asp) but also tRNA(Asn). Reaction proceeds in two steps: L-aspartate is first activated by ATP to form Asp-AMP and then transferred to the acceptor end of tRNA(Asp/Asn).</text>
</comment>
<comment type="catalytic activity">
    <reaction evidence="1">
        <text>tRNA(Asx) + L-aspartate + ATP = L-aspartyl-tRNA(Asx) + AMP + diphosphate</text>
        <dbReference type="Rhea" id="RHEA:18349"/>
        <dbReference type="Rhea" id="RHEA-COMP:9710"/>
        <dbReference type="Rhea" id="RHEA-COMP:9711"/>
        <dbReference type="ChEBI" id="CHEBI:29991"/>
        <dbReference type="ChEBI" id="CHEBI:30616"/>
        <dbReference type="ChEBI" id="CHEBI:33019"/>
        <dbReference type="ChEBI" id="CHEBI:78442"/>
        <dbReference type="ChEBI" id="CHEBI:78516"/>
        <dbReference type="ChEBI" id="CHEBI:456215"/>
        <dbReference type="EC" id="6.1.1.23"/>
    </reaction>
</comment>
<comment type="subunit">
    <text evidence="1">Homodimer.</text>
</comment>
<comment type="subcellular location">
    <subcellularLocation>
        <location evidence="1">Cytoplasm</location>
    </subcellularLocation>
</comment>
<comment type="similarity">
    <text evidence="1">Belongs to the class-II aminoacyl-tRNA synthetase family. Type 1 subfamily.</text>
</comment>
<sequence>MMRSHYCGQLNESLEGQEITLCGWVHRRRDHGGVIFLDIRDRDGLAQVVFDPDRAESFAAADRVRSEYVVKITGKVRLRPAGATNANMASGMIEVLGYELEVLNESETPPFPLNEFSDVGEETRLRYRFLDLRRPEMAEKLRLRSRMTTSIRRYLDENGFLDVETPILTRATPEGARDYLVPSRTHAGSFFALPQSPQLFKQLLMVAGFDRYYQIAKCFRDEDLRADRQPEFTQIDIETSFLDEKDIMGLTEGMIRNLFKEVLDLEFGEFPHMTFEEAMRRYGSDKPDLRNPLELVDVADQLKEVDFKVFSGPANDPKCRIAALRVPGGASMPRKQIDDYTKFVGIYGAKGLAYIKVNERAAGVEGLQSPIVKNIPEANLNVILDRVGAVDGDIVFFGADKAKIVSEALGALRIKLGHDLKLLTCEWAPMWVVDFPMFEENDDGSFSALHHPFTAPKCSPEELEANPAGALSRAYDMVLNGTELGGGSIRIHRKEMQQAVFRLLGINEAEQEEKFGFLLDALKYGAPPHGGLAFGLDRLVMLMTGAQSIREVIAFPKTQSAADVMTQAPGVVDAKALRELHIRLRETPKAE</sequence>
<reference key="1">
    <citation type="journal article" date="2009" name="Genome Biol.">
        <title>Genomic and genetic analyses of diversity and plant interactions of Pseudomonas fluorescens.</title>
        <authorList>
            <person name="Silby M.W."/>
            <person name="Cerdeno-Tarraga A.M."/>
            <person name="Vernikos G.S."/>
            <person name="Giddens S.R."/>
            <person name="Jackson R.W."/>
            <person name="Preston G.M."/>
            <person name="Zhang X.-X."/>
            <person name="Moon C.D."/>
            <person name="Gehrig S.M."/>
            <person name="Godfrey S.A.C."/>
            <person name="Knight C.G."/>
            <person name="Malone J.G."/>
            <person name="Robinson Z."/>
            <person name="Spiers A.J."/>
            <person name="Harris S."/>
            <person name="Challis G.L."/>
            <person name="Yaxley A.M."/>
            <person name="Harris D."/>
            <person name="Seeger K."/>
            <person name="Murphy L."/>
            <person name="Rutter S."/>
            <person name="Squares R."/>
            <person name="Quail M.A."/>
            <person name="Saunders E."/>
            <person name="Mavromatis K."/>
            <person name="Brettin T.S."/>
            <person name="Bentley S.D."/>
            <person name="Hothersall J."/>
            <person name="Stephens E."/>
            <person name="Thomas C.M."/>
            <person name="Parkhill J."/>
            <person name="Levy S.B."/>
            <person name="Rainey P.B."/>
            <person name="Thomson N.R."/>
        </authorList>
    </citation>
    <scope>NUCLEOTIDE SEQUENCE [LARGE SCALE GENOMIC DNA]</scope>
    <source>
        <strain>Pf0-1</strain>
    </source>
</reference>
<protein>
    <recommendedName>
        <fullName evidence="1">Aspartate--tRNA(Asp/Asn) ligase</fullName>
        <ecNumber evidence="1">6.1.1.23</ecNumber>
    </recommendedName>
    <alternativeName>
        <fullName evidence="1">Aspartyl-tRNA synthetase</fullName>
        <shortName evidence="1">AspRS</shortName>
    </alternativeName>
    <alternativeName>
        <fullName evidence="1">Non-discriminating aspartyl-tRNA synthetase</fullName>
        <shortName evidence="1">ND-AspRS</shortName>
    </alternativeName>
</protein>
<evidence type="ECO:0000255" key="1">
    <source>
        <dbReference type="HAMAP-Rule" id="MF_00044"/>
    </source>
</evidence>
<proteinExistence type="inferred from homology"/>